<organism>
    <name type="scientific">Kluyveromyces lactis (strain ATCC 8585 / CBS 2359 / DSM 70799 / NBRC 1267 / NRRL Y-1140 / WM37)</name>
    <name type="common">Yeast</name>
    <name type="synonym">Candida sphaerica</name>
    <dbReference type="NCBI Taxonomy" id="284590"/>
    <lineage>
        <taxon>Eukaryota</taxon>
        <taxon>Fungi</taxon>
        <taxon>Dikarya</taxon>
        <taxon>Ascomycota</taxon>
        <taxon>Saccharomycotina</taxon>
        <taxon>Saccharomycetes</taxon>
        <taxon>Saccharomycetales</taxon>
        <taxon>Saccharomycetaceae</taxon>
        <taxon>Kluyveromyces</taxon>
    </lineage>
</organism>
<comment type="function">
    <text evidence="1">Required for protein translocation and folding in the endoplasmic reticulum (ER). Functions as a nucleotide exchange factor for the ER lumenal chaperone KAR2 (By similarity).</text>
</comment>
<comment type="subunit">
    <text evidence="1">Interacts with KAR2.</text>
</comment>
<comment type="subcellular location">
    <subcellularLocation>
        <location evidence="3">Endoplasmic reticulum lumen</location>
    </subcellularLocation>
</comment>
<comment type="similarity">
    <text evidence="4">Belongs to the SIL1 family.</text>
</comment>
<sequence length="490" mass="55892">MRVKCVNRAIYVLTVLLFSRLVVSQVVLTPSNSNADPKQKDTANTVAAVEANNDANIAKKDAESDLVIGDHLVCNTKECYPIGFVPSTEWKEIRPGQRLPPGLDIRVSLEKGVREAKLPEPGSENIGNEEEDVKGLVLGAEGSTLSESELKETSEDLENEQSGFKLNNAEKESDILQQETDLKIAVSDNAEATSNEPAGHEFSEDFAKIKSLMQSPDEKTWEEVETLLDDLVEFAHDYKKGFKILSNEFELLEYLSFNDTLSIQIRELAARIIVSSLRNNPPSIDFVNEKYPQTTFKLCEHLSELQASQGSKLLIKRFLSILDVLLSRTEYVSIKDDVLWRLYQIEDPSSKIKILEIIAKFYNEKNEQVIDTVQQDMKTVQKWVNELTTIIQTPELDELHLRSFFHCISFIKTRFKNRVKIDSDFLNWLIDEIEVRNEKSKDDIYKRDVDQLEFDNQLAKSRHAVFGNPNAARLKERLFDDDDTLIADEL</sequence>
<gene>
    <name type="primary">SIL1</name>
    <name type="ordered locus">KLLA0F07931g</name>
</gene>
<reference key="1">
    <citation type="journal article" date="2004" name="Nature">
        <title>Genome evolution in yeasts.</title>
        <authorList>
            <person name="Dujon B."/>
            <person name="Sherman D."/>
            <person name="Fischer G."/>
            <person name="Durrens P."/>
            <person name="Casaregola S."/>
            <person name="Lafontaine I."/>
            <person name="de Montigny J."/>
            <person name="Marck C."/>
            <person name="Neuveglise C."/>
            <person name="Talla E."/>
            <person name="Goffard N."/>
            <person name="Frangeul L."/>
            <person name="Aigle M."/>
            <person name="Anthouard V."/>
            <person name="Babour A."/>
            <person name="Barbe V."/>
            <person name="Barnay S."/>
            <person name="Blanchin S."/>
            <person name="Beckerich J.-M."/>
            <person name="Beyne E."/>
            <person name="Bleykasten C."/>
            <person name="Boisrame A."/>
            <person name="Boyer J."/>
            <person name="Cattolico L."/>
            <person name="Confanioleri F."/>
            <person name="de Daruvar A."/>
            <person name="Despons L."/>
            <person name="Fabre E."/>
            <person name="Fairhead C."/>
            <person name="Ferry-Dumazet H."/>
            <person name="Groppi A."/>
            <person name="Hantraye F."/>
            <person name="Hennequin C."/>
            <person name="Jauniaux N."/>
            <person name="Joyet P."/>
            <person name="Kachouri R."/>
            <person name="Kerrest A."/>
            <person name="Koszul R."/>
            <person name="Lemaire M."/>
            <person name="Lesur I."/>
            <person name="Ma L."/>
            <person name="Muller H."/>
            <person name="Nicaud J.-M."/>
            <person name="Nikolski M."/>
            <person name="Oztas S."/>
            <person name="Ozier-Kalogeropoulos O."/>
            <person name="Pellenz S."/>
            <person name="Potier S."/>
            <person name="Richard G.-F."/>
            <person name="Straub M.-L."/>
            <person name="Suleau A."/>
            <person name="Swennen D."/>
            <person name="Tekaia F."/>
            <person name="Wesolowski-Louvel M."/>
            <person name="Westhof E."/>
            <person name="Wirth B."/>
            <person name="Zeniou-Meyer M."/>
            <person name="Zivanovic Y."/>
            <person name="Bolotin-Fukuhara M."/>
            <person name="Thierry A."/>
            <person name="Bouchier C."/>
            <person name="Caudron B."/>
            <person name="Scarpelli C."/>
            <person name="Gaillardin C."/>
            <person name="Weissenbach J."/>
            <person name="Wincker P."/>
            <person name="Souciet J.-L."/>
        </authorList>
    </citation>
    <scope>NUCLEOTIDE SEQUENCE [LARGE SCALE GENOMIC DNA]</scope>
    <source>
        <strain>ATCC 8585 / CBS 2359 / DSM 70799 / NBRC 1267 / NRRL Y-1140 / WM37</strain>
    </source>
</reference>
<keyword id="KW-0256">Endoplasmic reticulum</keyword>
<keyword id="KW-0325">Glycoprotein</keyword>
<keyword id="KW-0653">Protein transport</keyword>
<keyword id="KW-1185">Reference proteome</keyword>
<keyword id="KW-0732">Signal</keyword>
<keyword id="KW-0811">Translocation</keyword>
<keyword id="KW-0813">Transport</keyword>
<dbReference type="EMBL" id="CR382126">
    <property type="protein sequence ID" value="CAG98147.1"/>
    <property type="molecule type" value="Genomic_DNA"/>
</dbReference>
<dbReference type="RefSeq" id="XP_455439.1">
    <property type="nucleotide sequence ID" value="XM_455439.1"/>
</dbReference>
<dbReference type="SMR" id="Q6CKV0"/>
<dbReference type="FunCoup" id="Q6CKV0">
    <property type="interactions" value="194"/>
</dbReference>
<dbReference type="STRING" id="284590.Q6CKV0"/>
<dbReference type="GlyCosmos" id="Q6CKV0">
    <property type="glycosylation" value="1 site, No reported glycans"/>
</dbReference>
<dbReference type="PaxDb" id="284590-Q6CKV0"/>
<dbReference type="KEGG" id="kla:KLLA0_F07931g"/>
<dbReference type="eggNOG" id="KOG2160">
    <property type="taxonomic scope" value="Eukaryota"/>
</dbReference>
<dbReference type="HOGENOM" id="CLU_034955_0_0_1"/>
<dbReference type="InParanoid" id="Q6CKV0"/>
<dbReference type="OMA" id="GLDIRMN"/>
<dbReference type="Proteomes" id="UP000000598">
    <property type="component" value="Chromosome F"/>
</dbReference>
<dbReference type="GO" id="GO:0005788">
    <property type="term" value="C:endoplasmic reticulum lumen"/>
    <property type="evidence" value="ECO:0007669"/>
    <property type="project" value="UniProtKB-SubCell"/>
</dbReference>
<dbReference type="GO" id="GO:0000774">
    <property type="term" value="F:adenyl-nucleotide exchange factor activity"/>
    <property type="evidence" value="ECO:0007669"/>
    <property type="project" value="InterPro"/>
</dbReference>
<dbReference type="GO" id="GO:0015031">
    <property type="term" value="P:protein transport"/>
    <property type="evidence" value="ECO:0007669"/>
    <property type="project" value="UniProtKB-KW"/>
</dbReference>
<dbReference type="Gene3D" id="1.25.10.10">
    <property type="entry name" value="Leucine-rich Repeat Variant"/>
    <property type="match status" value="1"/>
</dbReference>
<dbReference type="InterPro" id="IPR011989">
    <property type="entry name" value="ARM-like"/>
</dbReference>
<dbReference type="InterPro" id="IPR016024">
    <property type="entry name" value="ARM-type_fold"/>
</dbReference>
<dbReference type="InterPro" id="IPR031884">
    <property type="entry name" value="Sil1_fungi"/>
</dbReference>
<dbReference type="Pfam" id="PF16782">
    <property type="entry name" value="SIL1"/>
    <property type="match status" value="1"/>
</dbReference>
<dbReference type="SUPFAM" id="SSF48371">
    <property type="entry name" value="ARM repeat"/>
    <property type="match status" value="1"/>
</dbReference>
<dbReference type="PROSITE" id="PS00014">
    <property type="entry name" value="ER_TARGET"/>
    <property type="match status" value="1"/>
</dbReference>
<name>SIL1_KLULA</name>
<evidence type="ECO:0000250" key="1"/>
<evidence type="ECO:0000255" key="2"/>
<evidence type="ECO:0000255" key="3">
    <source>
        <dbReference type="PROSITE-ProRule" id="PRU10138"/>
    </source>
</evidence>
<evidence type="ECO:0000305" key="4"/>
<protein>
    <recommendedName>
        <fullName>Nucleotide exchange factor SIL1</fullName>
    </recommendedName>
</protein>
<accession>Q6CKV0</accession>
<proteinExistence type="inferred from homology"/>
<feature type="signal peptide" evidence="2">
    <location>
        <begin position="1"/>
        <end position="24"/>
    </location>
</feature>
<feature type="chain" id="PRO_0000223363" description="Nucleotide exchange factor SIL1">
    <location>
        <begin position="25"/>
        <end position="490"/>
    </location>
</feature>
<feature type="short sequence motif" description="Prevents secretion from ER" evidence="3">
    <location>
        <begin position="487"/>
        <end position="490"/>
    </location>
</feature>
<feature type="glycosylation site" description="N-linked (GlcNAc...) asparagine" evidence="2">
    <location>
        <position position="258"/>
    </location>
</feature>